<comment type="function">
    <text evidence="2">Acts as a transcriptional activator of the mimABCD operon encoding the propane 2-monooxygenase complex.</text>
</comment>
<comment type="disruption phenotype">
    <text evidence="2">Cells lacking this gene are unable to express the mimABCD operon.</text>
</comment>
<reference key="1">
    <citation type="submission" date="2006-10" db="EMBL/GenBank/DDBJ databases">
        <authorList>
            <person name="Fleischmann R.D."/>
            <person name="Dodson R.J."/>
            <person name="Haft D.H."/>
            <person name="Merkel J.S."/>
            <person name="Nelson W.C."/>
            <person name="Fraser C.M."/>
        </authorList>
    </citation>
    <scope>NUCLEOTIDE SEQUENCE [LARGE SCALE GENOMIC DNA]</scope>
    <source>
        <strain evidence="5">ATCC 700084 / mc(2)155</strain>
    </source>
</reference>
<reference key="2">
    <citation type="journal article" date="2011" name="J. Bacteriol.">
        <title>Identification of the regulator gene responsible for the acetone-responsive expression of the binuclear iron monooxygenase gene cluster in mycobacteria.</title>
        <authorList>
            <person name="Furuya T."/>
            <person name="Hirose S."/>
            <person name="Semba H."/>
            <person name="Kino K."/>
        </authorList>
    </citation>
    <scope>FUNCTION</scope>
    <scope>DISRUPTION PHENOTYPE</scope>
    <source>
        <strain>ATCC 700084 / mc(2)155</strain>
    </source>
</reference>
<proteinExistence type="predicted"/>
<protein>
    <recommendedName>
        <fullName evidence="3">Propane 2-monooxygenase operon transcriptional activator MimR</fullName>
    </recommendedName>
</protein>
<dbReference type="EMBL" id="CP000480">
    <property type="protein sequence ID" value="ABK75314.1"/>
    <property type="molecule type" value="Genomic_DNA"/>
</dbReference>
<dbReference type="RefSeq" id="WP_011728053.1">
    <property type="nucleotide sequence ID" value="NZ_SIJM01000020.1"/>
</dbReference>
<dbReference type="RefSeq" id="YP_886335.1">
    <property type="nucleotide sequence ID" value="NC_008596.1"/>
</dbReference>
<dbReference type="SMR" id="A0QTU7"/>
<dbReference type="STRING" id="246196.MSMEG_1970"/>
<dbReference type="PaxDb" id="246196-MSMEI_1926"/>
<dbReference type="GeneID" id="93456777"/>
<dbReference type="KEGG" id="msm:MSMEG_1970"/>
<dbReference type="PATRIC" id="fig|246196.19.peg.1947"/>
<dbReference type="eggNOG" id="COG3284">
    <property type="taxonomic scope" value="Bacteria"/>
</dbReference>
<dbReference type="OrthoDB" id="5496274at2"/>
<dbReference type="Proteomes" id="UP000000757">
    <property type="component" value="Chromosome"/>
</dbReference>
<dbReference type="GO" id="GO:0005524">
    <property type="term" value="F:ATP binding"/>
    <property type="evidence" value="ECO:0007669"/>
    <property type="project" value="UniProtKB-KW"/>
</dbReference>
<dbReference type="GO" id="GO:0043565">
    <property type="term" value="F:sequence-specific DNA binding"/>
    <property type="evidence" value="ECO:0007669"/>
    <property type="project" value="InterPro"/>
</dbReference>
<dbReference type="GO" id="GO:0006355">
    <property type="term" value="P:regulation of DNA-templated transcription"/>
    <property type="evidence" value="ECO:0007669"/>
    <property type="project" value="InterPro"/>
</dbReference>
<dbReference type="Gene3D" id="1.10.8.60">
    <property type="match status" value="1"/>
</dbReference>
<dbReference type="Gene3D" id="3.30.450.40">
    <property type="match status" value="1"/>
</dbReference>
<dbReference type="Gene3D" id="1.10.10.60">
    <property type="entry name" value="Homeodomain-like"/>
    <property type="match status" value="1"/>
</dbReference>
<dbReference type="Gene3D" id="3.40.50.300">
    <property type="entry name" value="P-loop containing nucleotide triphosphate hydrolases"/>
    <property type="match status" value="1"/>
</dbReference>
<dbReference type="InterPro" id="IPR029016">
    <property type="entry name" value="GAF-like_dom_sf"/>
</dbReference>
<dbReference type="InterPro" id="IPR009057">
    <property type="entry name" value="Homeodomain-like_sf"/>
</dbReference>
<dbReference type="InterPro" id="IPR002197">
    <property type="entry name" value="HTH_Fis"/>
</dbReference>
<dbReference type="InterPro" id="IPR027417">
    <property type="entry name" value="P-loop_NTPase"/>
</dbReference>
<dbReference type="InterPro" id="IPR002078">
    <property type="entry name" value="Sigma_54_int"/>
</dbReference>
<dbReference type="PANTHER" id="PTHR32071:SF122">
    <property type="entry name" value="SIGMA FACTOR"/>
    <property type="match status" value="1"/>
</dbReference>
<dbReference type="PANTHER" id="PTHR32071">
    <property type="entry name" value="TRANSCRIPTIONAL REGULATORY PROTEIN"/>
    <property type="match status" value="1"/>
</dbReference>
<dbReference type="Pfam" id="PF02954">
    <property type="entry name" value="HTH_8"/>
    <property type="match status" value="1"/>
</dbReference>
<dbReference type="PRINTS" id="PR01590">
    <property type="entry name" value="HTHFIS"/>
</dbReference>
<dbReference type="SUPFAM" id="SSF46689">
    <property type="entry name" value="Homeodomain-like"/>
    <property type="match status" value="1"/>
</dbReference>
<dbReference type="SUPFAM" id="SSF52540">
    <property type="entry name" value="P-loop containing nucleoside triphosphate hydrolases"/>
    <property type="match status" value="1"/>
</dbReference>
<dbReference type="PROSITE" id="PS50045">
    <property type="entry name" value="SIGMA54_INTERACT_4"/>
    <property type="match status" value="1"/>
</dbReference>
<sequence>MVRHADTPTDAQRAREQFLSTGALQPDAVASSVLNSWQRSRELHVHPDRVELPYVRDPDTDTPLMHAAAPVLRRMAEDLSDQSVSVVLTSADGLVLDRVAADTEFERVLDDVRLARGYSYAEEFAGTNGIGTALETGRPAFIRGSEHYVGTLGGLACAGSPIREPVTRRILGVIDLTCRARQADPLLFVLAKSAGSQIEDRLRTMNNETETALLDAYLKQSRRYPGGVLAIGGDVVLMNRYLRQALDAADQTVLLDHAAELTRSSFTSTTVAHLPSGASVKISAAERIIVGVRSDSVVFHVSVHVAESIPVRSSQHIPRLAGQSSSFRRSAQQVERCYRDREWVVIEGERGSGRTYLGYSVVHFVTPERSIPVLHIDNFDTPESFVAAFESETDSADFAVIVSDVDELPDEVLNPMAAIMQTRAGRGWIAATTSTERDSQLVDLLMLPFFTHTVTVPALRHRIEDLQELVPMILNELSRGEARMDGEAMRQLAKLPWPGNIAQLRHVLTETVRRQRSGVIGVDKLPAECRSVTRRKLTPLEAMERDAIVRSLLENDGNKADAAAALGMSRATIYRKIKDFGIA</sequence>
<accession>A0QTU7</accession>
<gene>
    <name evidence="3" type="primary">mimR</name>
    <name evidence="4" type="ordered locus">MSMEG_1970</name>
</gene>
<evidence type="ECO:0000255" key="1">
    <source>
        <dbReference type="PROSITE-ProRule" id="PRU00193"/>
    </source>
</evidence>
<evidence type="ECO:0000269" key="2">
    <source>
    </source>
</evidence>
<evidence type="ECO:0000303" key="3">
    <source>
    </source>
</evidence>
<evidence type="ECO:0000312" key="4">
    <source>
        <dbReference type="EMBL" id="ABK75314.1"/>
    </source>
</evidence>
<evidence type="ECO:0000312" key="5">
    <source>
        <dbReference type="Proteomes" id="UP000000757"/>
    </source>
</evidence>
<feature type="chain" id="PRO_0000442976" description="Propane 2-monooxygenase operon transcriptional activator MimR">
    <location>
        <begin position="1"/>
        <end position="583"/>
    </location>
</feature>
<feature type="domain" description="Sigma-54 factor interaction" evidence="1">
    <location>
        <begin position="320"/>
        <end position="513"/>
    </location>
</feature>
<feature type="binding site" evidence="1">
    <location>
        <begin position="349"/>
        <end position="356"/>
    </location>
    <ligand>
        <name>ATP</name>
        <dbReference type="ChEBI" id="CHEBI:30616"/>
    </ligand>
</feature>
<feature type="binding site" evidence="1">
    <location>
        <begin position="395"/>
        <end position="404"/>
    </location>
    <ligand>
        <name>ATP</name>
        <dbReference type="ChEBI" id="CHEBI:30616"/>
    </ligand>
</feature>
<name>MIMR_MYCS2</name>
<keyword id="KW-0010">Activator</keyword>
<keyword id="KW-0067">ATP-binding</keyword>
<keyword id="KW-0238">DNA-binding</keyword>
<keyword id="KW-0547">Nucleotide-binding</keyword>
<keyword id="KW-1185">Reference proteome</keyword>
<keyword id="KW-0804">Transcription</keyword>
<keyword id="KW-0805">Transcription regulation</keyword>
<organism>
    <name type="scientific">Mycolicibacterium smegmatis (strain ATCC 700084 / mc(2)155)</name>
    <name type="common">Mycobacterium smegmatis</name>
    <dbReference type="NCBI Taxonomy" id="246196"/>
    <lineage>
        <taxon>Bacteria</taxon>
        <taxon>Bacillati</taxon>
        <taxon>Actinomycetota</taxon>
        <taxon>Actinomycetes</taxon>
        <taxon>Mycobacteriales</taxon>
        <taxon>Mycobacteriaceae</taxon>
        <taxon>Mycolicibacterium</taxon>
    </lineage>
</organism>